<feature type="chain" id="PRO_0000344993" description="mRNA export factor GLE1">
    <location>
        <begin position="1"/>
        <end position="837"/>
    </location>
</feature>
<feature type="region of interest" description="Disordered" evidence="3">
    <location>
        <begin position="1"/>
        <end position="65"/>
    </location>
</feature>
<feature type="region of interest" description="Disordered" evidence="3">
    <location>
        <begin position="132"/>
        <end position="234"/>
    </location>
</feature>
<feature type="coiled-coil region" evidence="2">
    <location>
        <begin position="525"/>
        <end position="571"/>
    </location>
</feature>
<feature type="compositionally biased region" description="Low complexity" evidence="3">
    <location>
        <begin position="7"/>
        <end position="46"/>
    </location>
</feature>
<feature type="compositionally biased region" description="Low complexity" evidence="3">
    <location>
        <begin position="134"/>
        <end position="145"/>
    </location>
</feature>
<feature type="compositionally biased region" description="Acidic residues" evidence="3">
    <location>
        <begin position="171"/>
        <end position="188"/>
    </location>
</feature>
<feature type="compositionally biased region" description="Low complexity" evidence="3">
    <location>
        <begin position="198"/>
        <end position="212"/>
    </location>
</feature>
<feature type="compositionally biased region" description="Basic and acidic residues" evidence="3">
    <location>
        <begin position="213"/>
        <end position="234"/>
    </location>
</feature>
<proteinExistence type="inferred from homology"/>
<accession>Q55FW7</accession>
<reference key="1">
    <citation type="journal article" date="2005" name="Nature">
        <title>The genome of the social amoeba Dictyostelium discoideum.</title>
        <authorList>
            <person name="Eichinger L."/>
            <person name="Pachebat J.A."/>
            <person name="Gloeckner G."/>
            <person name="Rajandream M.A."/>
            <person name="Sucgang R."/>
            <person name="Berriman M."/>
            <person name="Song J."/>
            <person name="Olsen R."/>
            <person name="Szafranski K."/>
            <person name="Xu Q."/>
            <person name="Tunggal B."/>
            <person name="Kummerfeld S."/>
            <person name="Madera M."/>
            <person name="Konfortov B.A."/>
            <person name="Rivero F."/>
            <person name="Bankier A.T."/>
            <person name="Lehmann R."/>
            <person name="Hamlin N."/>
            <person name="Davies R."/>
            <person name="Gaudet P."/>
            <person name="Fey P."/>
            <person name="Pilcher K."/>
            <person name="Chen G."/>
            <person name="Saunders D."/>
            <person name="Sodergren E.J."/>
            <person name="Davis P."/>
            <person name="Kerhornou A."/>
            <person name="Nie X."/>
            <person name="Hall N."/>
            <person name="Anjard C."/>
            <person name="Hemphill L."/>
            <person name="Bason N."/>
            <person name="Farbrother P."/>
            <person name="Desany B."/>
            <person name="Just E."/>
            <person name="Morio T."/>
            <person name="Rost R."/>
            <person name="Churcher C.M."/>
            <person name="Cooper J."/>
            <person name="Haydock S."/>
            <person name="van Driessche N."/>
            <person name="Cronin A."/>
            <person name="Goodhead I."/>
            <person name="Muzny D.M."/>
            <person name="Mourier T."/>
            <person name="Pain A."/>
            <person name="Lu M."/>
            <person name="Harper D."/>
            <person name="Lindsay R."/>
            <person name="Hauser H."/>
            <person name="James K.D."/>
            <person name="Quiles M."/>
            <person name="Madan Babu M."/>
            <person name="Saito T."/>
            <person name="Buchrieser C."/>
            <person name="Wardroper A."/>
            <person name="Felder M."/>
            <person name="Thangavelu M."/>
            <person name="Johnson D."/>
            <person name="Knights A."/>
            <person name="Loulseged H."/>
            <person name="Mungall K.L."/>
            <person name="Oliver K."/>
            <person name="Price C."/>
            <person name="Quail M.A."/>
            <person name="Urushihara H."/>
            <person name="Hernandez J."/>
            <person name="Rabbinowitsch E."/>
            <person name="Steffen D."/>
            <person name="Sanders M."/>
            <person name="Ma J."/>
            <person name="Kohara Y."/>
            <person name="Sharp S."/>
            <person name="Simmonds M.N."/>
            <person name="Spiegler S."/>
            <person name="Tivey A."/>
            <person name="Sugano S."/>
            <person name="White B."/>
            <person name="Walker D."/>
            <person name="Woodward J.R."/>
            <person name="Winckler T."/>
            <person name="Tanaka Y."/>
            <person name="Shaulsky G."/>
            <person name="Schleicher M."/>
            <person name="Weinstock G.M."/>
            <person name="Rosenthal A."/>
            <person name="Cox E.C."/>
            <person name="Chisholm R.L."/>
            <person name="Gibbs R.A."/>
            <person name="Loomis W.F."/>
            <person name="Platzer M."/>
            <person name="Kay R.R."/>
            <person name="Williams J.G."/>
            <person name="Dear P.H."/>
            <person name="Noegel A.A."/>
            <person name="Barrell B.G."/>
            <person name="Kuspa A."/>
        </authorList>
    </citation>
    <scope>NUCLEOTIDE SEQUENCE [LARGE SCALE GENOMIC DNA]</scope>
    <source>
        <strain>AX4</strain>
    </source>
</reference>
<dbReference type="EMBL" id="AAFI02000003">
    <property type="protein sequence ID" value="EAL73412.1"/>
    <property type="molecule type" value="Genomic_DNA"/>
</dbReference>
<dbReference type="RefSeq" id="XP_647416.1">
    <property type="nucleotide sequence ID" value="XM_642324.1"/>
</dbReference>
<dbReference type="SMR" id="Q55FW7"/>
<dbReference type="FunCoup" id="Q55FW7">
    <property type="interactions" value="720"/>
</dbReference>
<dbReference type="STRING" id="44689.Q55FW7"/>
<dbReference type="PaxDb" id="44689-DDB0189646"/>
<dbReference type="EnsemblProtists" id="EAL73412">
    <property type="protein sequence ID" value="EAL73412"/>
    <property type="gene ID" value="DDB_G0267918"/>
</dbReference>
<dbReference type="GeneID" id="8616223"/>
<dbReference type="KEGG" id="ddi:DDB_G0267918"/>
<dbReference type="dictyBase" id="DDB_G0267918"/>
<dbReference type="VEuPathDB" id="AmoebaDB:DDB_G0267918"/>
<dbReference type="eggNOG" id="KOG2412">
    <property type="taxonomic scope" value="Eukaryota"/>
</dbReference>
<dbReference type="HOGENOM" id="CLU_339622_0_0_1"/>
<dbReference type="InParanoid" id="Q55FW7"/>
<dbReference type="OMA" id="AYMYKES"/>
<dbReference type="PRO" id="PR:Q55FW7"/>
<dbReference type="Proteomes" id="UP000002195">
    <property type="component" value="Chromosome 1"/>
</dbReference>
<dbReference type="GO" id="GO:0005737">
    <property type="term" value="C:cytoplasm"/>
    <property type="evidence" value="ECO:0000318"/>
    <property type="project" value="GO_Central"/>
</dbReference>
<dbReference type="GO" id="GO:0031012">
    <property type="term" value="C:extracellular matrix"/>
    <property type="evidence" value="ECO:0007005"/>
    <property type="project" value="dictyBase"/>
</dbReference>
<dbReference type="GO" id="GO:0044614">
    <property type="term" value="C:nuclear pore cytoplasmic filaments"/>
    <property type="evidence" value="ECO:0000314"/>
    <property type="project" value="dictyBase"/>
</dbReference>
<dbReference type="GO" id="GO:0000922">
    <property type="term" value="C:spindle pole"/>
    <property type="evidence" value="ECO:0000314"/>
    <property type="project" value="dictyBase"/>
</dbReference>
<dbReference type="GO" id="GO:0000822">
    <property type="term" value="F:inositol hexakisphosphate binding"/>
    <property type="evidence" value="ECO:0000318"/>
    <property type="project" value="GO_Central"/>
</dbReference>
<dbReference type="GO" id="GO:0005543">
    <property type="term" value="F:phospholipid binding"/>
    <property type="evidence" value="ECO:0000318"/>
    <property type="project" value="GO_Central"/>
</dbReference>
<dbReference type="GO" id="GO:0031369">
    <property type="term" value="F:translation initiation factor binding"/>
    <property type="evidence" value="ECO:0000318"/>
    <property type="project" value="GO_Central"/>
</dbReference>
<dbReference type="GO" id="GO:0016973">
    <property type="term" value="P:poly(A)+ mRNA export from nucleus"/>
    <property type="evidence" value="ECO:0000318"/>
    <property type="project" value="GO_Central"/>
</dbReference>
<dbReference type="GO" id="GO:0015031">
    <property type="term" value="P:protein transport"/>
    <property type="evidence" value="ECO:0007669"/>
    <property type="project" value="UniProtKB-KW"/>
</dbReference>
<dbReference type="FunFam" id="1.25.40.510:FF:000008">
    <property type="entry name" value="Nucleoporin GLE1"/>
    <property type="match status" value="1"/>
</dbReference>
<dbReference type="Gene3D" id="1.25.40.510">
    <property type="entry name" value="GLE1-like"/>
    <property type="match status" value="1"/>
</dbReference>
<dbReference type="InterPro" id="IPR012476">
    <property type="entry name" value="GLE1"/>
</dbReference>
<dbReference type="InterPro" id="IPR038506">
    <property type="entry name" value="GLE1-like_sf"/>
</dbReference>
<dbReference type="PANTHER" id="PTHR12960">
    <property type="entry name" value="GLE-1-RELATED"/>
    <property type="match status" value="1"/>
</dbReference>
<dbReference type="PANTHER" id="PTHR12960:SF0">
    <property type="entry name" value="MRNA EXPORT FACTOR GLE1"/>
    <property type="match status" value="1"/>
</dbReference>
<dbReference type="Pfam" id="PF07817">
    <property type="entry name" value="GLE1"/>
    <property type="match status" value="1"/>
</dbReference>
<dbReference type="SUPFAM" id="SSF81995">
    <property type="entry name" value="beta-sandwich domain of Sec23/24"/>
    <property type="match status" value="1"/>
</dbReference>
<comment type="function">
    <text evidence="1">Required for the export of mRNAs containing poly(A) tails from the nucleus into the cytoplasm. May be involved in the terminal step of the mRNA transport through the nuclear pore complex (NPC) (By similarity).</text>
</comment>
<comment type="subunit">
    <text evidence="1">May associate with the NPC.</text>
</comment>
<comment type="subcellular location">
    <subcellularLocation>
        <location evidence="1">Cytoplasm</location>
    </subcellularLocation>
    <subcellularLocation>
        <location evidence="1">Nucleus</location>
        <location evidence="1">Nuclear pore complex</location>
    </subcellularLocation>
</comment>
<comment type="similarity">
    <text evidence="4">Belongs to the GLE1 family.</text>
</comment>
<protein>
    <recommendedName>
        <fullName evidence="4">mRNA export factor GLE1</fullName>
    </recommendedName>
    <alternativeName>
        <fullName evidence="4">Nucleoporin GLE1</fullName>
    </alternativeName>
</protein>
<evidence type="ECO:0000250" key="1"/>
<evidence type="ECO:0000255" key="2"/>
<evidence type="ECO:0000256" key="3">
    <source>
        <dbReference type="SAM" id="MobiDB-lite"/>
    </source>
</evidence>
<evidence type="ECO:0000305" key="4"/>
<sequence length="837" mass="98690">MNKTSSNNISNTNNNNNNNNNNNNNNNNNNNNNNNNNNNNNNNNNNRILSPFKRNNSKENGNGSVTITLEPLVSPFKLIKSNFKDDVHTNNINNNNNKIKRFLDEDNEFEITIPIRRSGNSINFNIGIVPSSNKKQQQQQQQQQKQKQKKKKTLSPLKKAPGIYSLKDLTIDSDSDSDSYSDNDDNEEYNIKLKSPIKNKIVNNNNNQQQQQKQKEKEEKEEKEKVEKDKKEKDKKKLILNSFQSELIINRVEREREIKINRIVEEKNKEIDDKWVEIKEYNQNQMIKERKEFHSQQIRLNNLIKKQHKKDIKEFSIKLKQAKQKHQSELSESLSLLNQLNKLEQQEIDRHNEELLKYELAIKEEKRKQQQLIERYEQKKREEKQRQLQQEQKEKQEKLEKEEKEKEQQEQQKQLLIKLAKEKEEKEKFEKEQQQQKEKELQKEKELLQQKEKEKEKEKLQQQQQQQQQQQQQQQQQLQQQQQQQNQQNNNLGYIKKDGIIFSLNENSKNFNDFKERSKEFDMIIKFINEKKSMLSREMVEFERQNSKLINIAINQISASQEQVNEKTNKLIKSIQDSQQSDYLKKSTILSIVKKSLSQVESQITFHNASSFPLALVLVRVGEKYPELIDCLLASLNEKCCYTVPYYVSPKENESQSSISKRMGYAFSNDIVGDNDKPIETEDEFHKRICGYLSLYCALILKSEQPHKSSSSSSSSSSSTMMFGFGTQIGNNNNNKLINKNLNIESSLRWLKDLVSLRPRRITSYLFVTFFTHLGNLLSKNQKSSLEFKIIVGKIVEENFFNQMNKPGTEGSFSRLKNLIEEYYKTGTFQQHEGVDF</sequence>
<organism>
    <name type="scientific">Dictyostelium discoideum</name>
    <name type="common">Social amoeba</name>
    <dbReference type="NCBI Taxonomy" id="44689"/>
    <lineage>
        <taxon>Eukaryota</taxon>
        <taxon>Amoebozoa</taxon>
        <taxon>Evosea</taxon>
        <taxon>Eumycetozoa</taxon>
        <taxon>Dictyostelia</taxon>
        <taxon>Dictyosteliales</taxon>
        <taxon>Dictyosteliaceae</taxon>
        <taxon>Dictyostelium</taxon>
    </lineage>
</organism>
<name>GLE1_DICDI</name>
<keyword id="KW-0175">Coiled coil</keyword>
<keyword id="KW-0963">Cytoplasm</keyword>
<keyword id="KW-0509">mRNA transport</keyword>
<keyword id="KW-0906">Nuclear pore complex</keyword>
<keyword id="KW-0539">Nucleus</keyword>
<keyword id="KW-0653">Protein transport</keyword>
<keyword id="KW-1185">Reference proteome</keyword>
<keyword id="KW-0811">Translocation</keyword>
<keyword id="KW-0813">Transport</keyword>
<gene>
    <name type="primary">gle1</name>
    <name type="ORF">DDB_G0267918</name>
</gene>